<feature type="chain" id="PRO_0000270585" description="Neurensin-2">
    <location>
        <begin position="1"/>
        <end position="202"/>
    </location>
</feature>
<feature type="transmembrane region" description="Helical" evidence="1">
    <location>
        <begin position="65"/>
        <end position="85"/>
    </location>
</feature>
<feature type="transmembrane region" description="Helical" evidence="1">
    <location>
        <begin position="116"/>
        <end position="136"/>
    </location>
</feature>
<feature type="region of interest" description="Disordered" evidence="2">
    <location>
        <begin position="162"/>
        <end position="202"/>
    </location>
</feature>
<feature type="compositionally biased region" description="Polar residues" evidence="2">
    <location>
        <begin position="188"/>
        <end position="202"/>
    </location>
</feature>
<name>NRSN2_MOUSE</name>
<gene>
    <name evidence="7" type="primary">Nrsn2</name>
    <name evidence="7" type="synonym">Gm123</name>
</gene>
<accession>Q5HZK2</accession>
<accession>A2AS81</accession>
<accession>Q3USR0</accession>
<proteinExistence type="evidence at protein level"/>
<comment type="function">
    <text evidence="3">May play a role in maintenance and/or transport of vesicles.</text>
</comment>
<comment type="subcellular location">
    <subcellularLocation>
        <location evidence="1">Membrane</location>
        <topology evidence="1">Multi-pass membrane protein</topology>
    </subcellularLocation>
</comment>
<comment type="tissue specificity">
    <text evidence="3">Expressed specifically in brain where it is widely expressed, with highest levels of expression in thalamus and hypothalamus. In brain, found in neural cell bodies and detected in many regions of the limbic system, such as the septum nucleus, horizontal and vertical limbs of the diagonal band, hippocampus, amygdaloid nucleus, and habernula nucleus. Also localizes to small vesicles found in the perinuclear region of Neuro2a and PC12 cells.</text>
</comment>
<comment type="developmental stage">
    <text evidence="3">In cerebral cortex first detected at 15.5 dpc with increasing levels of expression observed during postnatal stages.</text>
</comment>
<comment type="similarity">
    <text evidence="1">Belongs to the VMP family.</text>
</comment>
<comment type="sequence caution" evidence="4">
    <conflict type="frameshift">
        <sequence resource="EMBL-CDS" id="BAE24271"/>
    </conflict>
</comment>
<protein>
    <recommendedName>
        <fullName>Neurensin-2</fullName>
    </recommendedName>
</protein>
<keyword id="KW-0472">Membrane</keyword>
<keyword id="KW-1185">Reference proteome</keyword>
<keyword id="KW-0812">Transmembrane</keyword>
<keyword id="KW-1133">Transmembrane helix</keyword>
<reference evidence="4" key="1">
    <citation type="journal article" date="2006" name="Brain Res.">
        <title>Molecular characterization of a transport vesicle protein Neurensin-2, a homologue of Neurensin-1, expressed in neural cells.</title>
        <authorList>
            <person name="Nakanishi K."/>
            <person name="Ida M."/>
            <person name="Suzuki H."/>
            <person name="Kitano C."/>
            <person name="Yamamoto A."/>
            <person name="Mori N."/>
            <person name="Araki M."/>
            <person name="Taketani S."/>
        </authorList>
    </citation>
    <scope>NUCLEOTIDE SEQUENCE [MRNA]</scope>
    <scope>FUNCTION</scope>
    <scope>TISSUE SPECIFICITY</scope>
    <scope>DEVELOPMENTAL STAGE</scope>
</reference>
<reference evidence="6" key="2">
    <citation type="journal article" date="2005" name="Science">
        <title>The transcriptional landscape of the mammalian genome.</title>
        <authorList>
            <person name="Carninci P."/>
            <person name="Kasukawa T."/>
            <person name="Katayama S."/>
            <person name="Gough J."/>
            <person name="Frith M.C."/>
            <person name="Maeda N."/>
            <person name="Oyama R."/>
            <person name="Ravasi T."/>
            <person name="Lenhard B."/>
            <person name="Wells C."/>
            <person name="Kodzius R."/>
            <person name="Shimokawa K."/>
            <person name="Bajic V.B."/>
            <person name="Brenner S.E."/>
            <person name="Batalov S."/>
            <person name="Forrest A.R."/>
            <person name="Zavolan M."/>
            <person name="Davis M.J."/>
            <person name="Wilming L.G."/>
            <person name="Aidinis V."/>
            <person name="Allen J.E."/>
            <person name="Ambesi-Impiombato A."/>
            <person name="Apweiler R."/>
            <person name="Aturaliya R.N."/>
            <person name="Bailey T.L."/>
            <person name="Bansal M."/>
            <person name="Baxter L."/>
            <person name="Beisel K.W."/>
            <person name="Bersano T."/>
            <person name="Bono H."/>
            <person name="Chalk A.M."/>
            <person name="Chiu K.P."/>
            <person name="Choudhary V."/>
            <person name="Christoffels A."/>
            <person name="Clutterbuck D.R."/>
            <person name="Crowe M.L."/>
            <person name="Dalla E."/>
            <person name="Dalrymple B.P."/>
            <person name="de Bono B."/>
            <person name="Della Gatta G."/>
            <person name="di Bernardo D."/>
            <person name="Down T."/>
            <person name="Engstrom P."/>
            <person name="Fagiolini M."/>
            <person name="Faulkner G."/>
            <person name="Fletcher C.F."/>
            <person name="Fukushima T."/>
            <person name="Furuno M."/>
            <person name="Futaki S."/>
            <person name="Gariboldi M."/>
            <person name="Georgii-Hemming P."/>
            <person name="Gingeras T.R."/>
            <person name="Gojobori T."/>
            <person name="Green R.E."/>
            <person name="Gustincich S."/>
            <person name="Harbers M."/>
            <person name="Hayashi Y."/>
            <person name="Hensch T.K."/>
            <person name="Hirokawa N."/>
            <person name="Hill D."/>
            <person name="Huminiecki L."/>
            <person name="Iacono M."/>
            <person name="Ikeo K."/>
            <person name="Iwama A."/>
            <person name="Ishikawa T."/>
            <person name="Jakt M."/>
            <person name="Kanapin A."/>
            <person name="Katoh M."/>
            <person name="Kawasawa Y."/>
            <person name="Kelso J."/>
            <person name="Kitamura H."/>
            <person name="Kitano H."/>
            <person name="Kollias G."/>
            <person name="Krishnan S.P."/>
            <person name="Kruger A."/>
            <person name="Kummerfeld S.K."/>
            <person name="Kurochkin I.V."/>
            <person name="Lareau L.F."/>
            <person name="Lazarevic D."/>
            <person name="Lipovich L."/>
            <person name="Liu J."/>
            <person name="Liuni S."/>
            <person name="McWilliam S."/>
            <person name="Madan Babu M."/>
            <person name="Madera M."/>
            <person name="Marchionni L."/>
            <person name="Matsuda H."/>
            <person name="Matsuzawa S."/>
            <person name="Miki H."/>
            <person name="Mignone F."/>
            <person name="Miyake S."/>
            <person name="Morris K."/>
            <person name="Mottagui-Tabar S."/>
            <person name="Mulder N."/>
            <person name="Nakano N."/>
            <person name="Nakauchi H."/>
            <person name="Ng P."/>
            <person name="Nilsson R."/>
            <person name="Nishiguchi S."/>
            <person name="Nishikawa S."/>
            <person name="Nori F."/>
            <person name="Ohara O."/>
            <person name="Okazaki Y."/>
            <person name="Orlando V."/>
            <person name="Pang K.C."/>
            <person name="Pavan W.J."/>
            <person name="Pavesi G."/>
            <person name="Pesole G."/>
            <person name="Petrovsky N."/>
            <person name="Piazza S."/>
            <person name="Reed J."/>
            <person name="Reid J.F."/>
            <person name="Ring B.Z."/>
            <person name="Ringwald M."/>
            <person name="Rost B."/>
            <person name="Ruan Y."/>
            <person name="Salzberg S.L."/>
            <person name="Sandelin A."/>
            <person name="Schneider C."/>
            <person name="Schoenbach C."/>
            <person name="Sekiguchi K."/>
            <person name="Semple C.A."/>
            <person name="Seno S."/>
            <person name="Sessa L."/>
            <person name="Sheng Y."/>
            <person name="Shibata Y."/>
            <person name="Shimada H."/>
            <person name="Shimada K."/>
            <person name="Silva D."/>
            <person name="Sinclair B."/>
            <person name="Sperling S."/>
            <person name="Stupka E."/>
            <person name="Sugiura K."/>
            <person name="Sultana R."/>
            <person name="Takenaka Y."/>
            <person name="Taki K."/>
            <person name="Tammoja K."/>
            <person name="Tan S.L."/>
            <person name="Tang S."/>
            <person name="Taylor M.S."/>
            <person name="Tegner J."/>
            <person name="Teichmann S.A."/>
            <person name="Ueda H.R."/>
            <person name="van Nimwegen E."/>
            <person name="Verardo R."/>
            <person name="Wei C.L."/>
            <person name="Yagi K."/>
            <person name="Yamanishi H."/>
            <person name="Zabarovsky E."/>
            <person name="Zhu S."/>
            <person name="Zimmer A."/>
            <person name="Hide W."/>
            <person name="Bult C."/>
            <person name="Grimmond S.M."/>
            <person name="Teasdale R.D."/>
            <person name="Liu E.T."/>
            <person name="Brusic V."/>
            <person name="Quackenbush J."/>
            <person name="Wahlestedt C."/>
            <person name="Mattick J.S."/>
            <person name="Hume D.A."/>
            <person name="Kai C."/>
            <person name="Sasaki D."/>
            <person name="Tomaru Y."/>
            <person name="Fukuda S."/>
            <person name="Kanamori-Katayama M."/>
            <person name="Suzuki M."/>
            <person name="Aoki J."/>
            <person name="Arakawa T."/>
            <person name="Iida J."/>
            <person name="Imamura K."/>
            <person name="Itoh M."/>
            <person name="Kato T."/>
            <person name="Kawaji H."/>
            <person name="Kawagashira N."/>
            <person name="Kawashima T."/>
            <person name="Kojima M."/>
            <person name="Kondo S."/>
            <person name="Konno H."/>
            <person name="Nakano K."/>
            <person name="Ninomiya N."/>
            <person name="Nishio T."/>
            <person name="Okada M."/>
            <person name="Plessy C."/>
            <person name="Shibata K."/>
            <person name="Shiraki T."/>
            <person name="Suzuki S."/>
            <person name="Tagami M."/>
            <person name="Waki K."/>
            <person name="Watahiki A."/>
            <person name="Okamura-Oho Y."/>
            <person name="Suzuki H."/>
            <person name="Kawai J."/>
            <person name="Hayashizaki Y."/>
        </authorList>
    </citation>
    <scope>NUCLEOTIDE SEQUENCE [LARGE SCALE MRNA]</scope>
    <source>
        <strain evidence="6">C57BL/6J</strain>
        <tissue evidence="6">Corpora quadrigemina</tissue>
    </source>
</reference>
<reference key="3">
    <citation type="journal article" date="2009" name="PLoS Biol.">
        <title>Lineage-specific biology revealed by a finished genome assembly of the mouse.</title>
        <authorList>
            <person name="Church D.M."/>
            <person name="Goodstadt L."/>
            <person name="Hillier L.W."/>
            <person name="Zody M.C."/>
            <person name="Goldstein S."/>
            <person name="She X."/>
            <person name="Bult C.J."/>
            <person name="Agarwala R."/>
            <person name="Cherry J.L."/>
            <person name="DiCuccio M."/>
            <person name="Hlavina W."/>
            <person name="Kapustin Y."/>
            <person name="Meric P."/>
            <person name="Maglott D."/>
            <person name="Birtle Z."/>
            <person name="Marques A.C."/>
            <person name="Graves T."/>
            <person name="Zhou S."/>
            <person name="Teague B."/>
            <person name="Potamousis K."/>
            <person name="Churas C."/>
            <person name="Place M."/>
            <person name="Herschleb J."/>
            <person name="Runnheim R."/>
            <person name="Forrest D."/>
            <person name="Amos-Landgraf J."/>
            <person name="Schwartz D.C."/>
            <person name="Cheng Z."/>
            <person name="Lindblad-Toh K."/>
            <person name="Eichler E.E."/>
            <person name="Ponting C.P."/>
        </authorList>
    </citation>
    <scope>NUCLEOTIDE SEQUENCE [LARGE SCALE GENOMIC DNA]</scope>
    <source>
        <strain>C57BL/6J</strain>
    </source>
</reference>
<reference evidence="5" key="4">
    <citation type="journal article" date="2004" name="Genome Res.">
        <title>The status, quality, and expansion of the NIH full-length cDNA project: the Mammalian Gene Collection (MGC).</title>
        <authorList>
            <consortium name="The MGC Project Team"/>
        </authorList>
    </citation>
    <scope>NUCLEOTIDE SEQUENCE [LARGE SCALE MRNA]</scope>
    <source>
        <strain evidence="5">C57BL/6J</strain>
        <tissue evidence="5">Brain</tissue>
    </source>
</reference>
<reference key="5">
    <citation type="journal article" date="2010" name="Cell">
        <title>A tissue-specific atlas of mouse protein phosphorylation and expression.</title>
        <authorList>
            <person name="Huttlin E.L."/>
            <person name="Jedrychowski M.P."/>
            <person name="Elias J.E."/>
            <person name="Goswami T."/>
            <person name="Rad R."/>
            <person name="Beausoleil S.A."/>
            <person name="Villen J."/>
            <person name="Haas W."/>
            <person name="Sowa M.E."/>
            <person name="Gygi S.P."/>
        </authorList>
    </citation>
    <scope>IDENTIFICATION BY MASS SPECTROMETRY [LARGE SCALE ANALYSIS]</scope>
    <source>
        <tissue>Brain</tissue>
    </source>
</reference>
<dbReference type="EMBL" id="AK140190">
    <property type="protein sequence ID" value="BAE24271.1"/>
    <property type="status" value="ALT_FRAME"/>
    <property type="molecule type" value="mRNA"/>
</dbReference>
<dbReference type="EMBL" id="AL928568">
    <property type="status" value="NOT_ANNOTATED_CDS"/>
    <property type="molecule type" value="Genomic_DNA"/>
</dbReference>
<dbReference type="EMBL" id="BC088982">
    <property type="protein sequence ID" value="AAH88982.1"/>
    <property type="molecule type" value="mRNA"/>
</dbReference>
<dbReference type="CCDS" id="CCDS16882.1"/>
<dbReference type="RefSeq" id="NP_001009948.1">
    <property type="nucleotide sequence ID" value="NM_001009948.2"/>
</dbReference>
<dbReference type="FunCoup" id="Q5HZK2">
    <property type="interactions" value="68"/>
</dbReference>
<dbReference type="STRING" id="10090.ENSMUSP00000078260"/>
<dbReference type="GlyGen" id="Q5HZK2">
    <property type="glycosylation" value="1 site, 1 N-linked glycan (1 site)"/>
</dbReference>
<dbReference type="iPTMnet" id="Q5HZK2"/>
<dbReference type="PhosphoSitePlus" id="Q5HZK2"/>
<dbReference type="PaxDb" id="10090-ENSMUSP00000078260"/>
<dbReference type="ProteomicsDB" id="293749"/>
<dbReference type="Antibodypedia" id="3000">
    <property type="antibodies" value="170 antibodies from 26 providers"/>
</dbReference>
<dbReference type="DNASU" id="228777"/>
<dbReference type="Ensembl" id="ENSMUST00000079278.5">
    <property type="protein sequence ID" value="ENSMUSP00000078260.5"/>
    <property type="gene ID" value="ENSMUSG00000059361.7"/>
</dbReference>
<dbReference type="GeneID" id="228777"/>
<dbReference type="KEGG" id="mmu:228777"/>
<dbReference type="UCSC" id="uc008nfh.1">
    <property type="organism name" value="mouse"/>
</dbReference>
<dbReference type="AGR" id="MGI:2684969"/>
<dbReference type="CTD" id="80023"/>
<dbReference type="MGI" id="MGI:2684969">
    <property type="gene designation" value="Nrsn2"/>
</dbReference>
<dbReference type="VEuPathDB" id="HostDB:ENSMUSG00000059361"/>
<dbReference type="eggNOG" id="ENOG502S1MN">
    <property type="taxonomic scope" value="Eukaryota"/>
</dbReference>
<dbReference type="GeneTree" id="ENSGT00530000063877"/>
<dbReference type="HOGENOM" id="CLU_118170_0_0_1"/>
<dbReference type="InParanoid" id="Q5HZK2"/>
<dbReference type="OMA" id="CWKITLS"/>
<dbReference type="OrthoDB" id="5979667at2759"/>
<dbReference type="PhylomeDB" id="Q5HZK2"/>
<dbReference type="TreeFam" id="TF332090"/>
<dbReference type="BioGRID-ORCS" id="228777">
    <property type="hits" value="0 hits in 76 CRISPR screens"/>
</dbReference>
<dbReference type="PRO" id="PR:Q5HZK2"/>
<dbReference type="Proteomes" id="UP000000589">
    <property type="component" value="Chromosome 2"/>
</dbReference>
<dbReference type="RNAct" id="Q5HZK2">
    <property type="molecule type" value="protein"/>
</dbReference>
<dbReference type="Bgee" id="ENSMUSG00000059361">
    <property type="expression patterns" value="Expressed in superior frontal gyrus and 80 other cell types or tissues"/>
</dbReference>
<dbReference type="GO" id="GO:0031410">
    <property type="term" value="C:cytoplasmic vesicle"/>
    <property type="evidence" value="ECO:0000314"/>
    <property type="project" value="MGI"/>
</dbReference>
<dbReference type="GO" id="GO:0043025">
    <property type="term" value="C:neuronal cell body"/>
    <property type="evidence" value="ECO:0000314"/>
    <property type="project" value="MGI"/>
</dbReference>
<dbReference type="GO" id="GO:0005886">
    <property type="term" value="C:plasma membrane"/>
    <property type="evidence" value="ECO:0007669"/>
    <property type="project" value="Ensembl"/>
</dbReference>
<dbReference type="GO" id="GO:0030133">
    <property type="term" value="C:transport vesicle"/>
    <property type="evidence" value="ECO:0000314"/>
    <property type="project" value="UniProtKB"/>
</dbReference>
<dbReference type="InterPro" id="IPR024883">
    <property type="entry name" value="Neurensin"/>
</dbReference>
<dbReference type="PANTHER" id="PTHR14796">
    <property type="entry name" value="NEURENSIN 1-RELATED"/>
    <property type="match status" value="1"/>
</dbReference>
<dbReference type="PANTHER" id="PTHR14796:SF5">
    <property type="entry name" value="NEURENSIN-2"/>
    <property type="match status" value="1"/>
</dbReference>
<dbReference type="Pfam" id="PF14927">
    <property type="entry name" value="Neurensin"/>
    <property type="match status" value="1"/>
</dbReference>
<evidence type="ECO:0000255" key="1"/>
<evidence type="ECO:0000256" key="2">
    <source>
        <dbReference type="SAM" id="MobiDB-lite"/>
    </source>
</evidence>
<evidence type="ECO:0000269" key="3">
    <source>
    </source>
</evidence>
<evidence type="ECO:0000305" key="4"/>
<evidence type="ECO:0000312" key="5">
    <source>
        <dbReference type="EMBL" id="AAH88982.1"/>
    </source>
</evidence>
<evidence type="ECO:0000312" key="6">
    <source>
        <dbReference type="EMBL" id="BAE24271.1"/>
    </source>
</evidence>
<evidence type="ECO:0000312" key="7">
    <source>
        <dbReference type="MGI" id="MGI:2684969"/>
    </source>
</evidence>
<sequence>MSCSRPCVCSHGTSVEESTWYGFDFYPNLFYNDWLGTTTLPYNPERIPIRYINRPWPSLCWKVTVAVASLFLLLGVAALTTGYAVPPKLELVNESKFSSMEDPVADYNQALMTCRVVGATLCGVAGIMLAVCLFLIASGWMFQDIKAEPLVTETDSPVEVFRDEPEKLSPAFHETSSQSPFLTPPSPFGQQSVQTSQPQRDL</sequence>
<organism>
    <name type="scientific">Mus musculus</name>
    <name type="common">Mouse</name>
    <dbReference type="NCBI Taxonomy" id="10090"/>
    <lineage>
        <taxon>Eukaryota</taxon>
        <taxon>Metazoa</taxon>
        <taxon>Chordata</taxon>
        <taxon>Craniata</taxon>
        <taxon>Vertebrata</taxon>
        <taxon>Euteleostomi</taxon>
        <taxon>Mammalia</taxon>
        <taxon>Eutheria</taxon>
        <taxon>Euarchontoglires</taxon>
        <taxon>Glires</taxon>
        <taxon>Rodentia</taxon>
        <taxon>Myomorpha</taxon>
        <taxon>Muroidea</taxon>
        <taxon>Muridae</taxon>
        <taxon>Murinae</taxon>
        <taxon>Mus</taxon>
        <taxon>Mus</taxon>
    </lineage>
</organism>